<sequence>MTGQLIQYGRHRKRRSYARISEILELPNLIEIQTKSYDWFLKEGLIEMFKDISPIEDFTGNLSLEFVDYKLGEPKYDLDESKNRDATYAAPLRVKVRLIIKETGEVKEQEVFMGDFPLMTDTGTFVINGAERVIVSQLVRSPSVYFNDKVDKNGKVSFGATVIPNRGAWLEYETDAKDVVFVRIDRTRKLPITVLLRALGFSTDQEIIDLLGDNEYLRNALDKDNTESTEAALLEIYERLRPGEPPTVENAKSLLYSRFFDPKRYDLASVGRYKMNKKLHLKHRLFNQVLAEPIVNTETGEIVAEEGTLLDRRNLDQIIDVLESNANQKVYDLDNGLLDEPIEIQSVKVYVPGDEEKRTTTIIGNAFPDDEVKCITPADILSSVSYFFNLLAGVGFTDDIDHLGNRRLRSVGELLQNQFRIGLSRMERVVRERMSLQDTESVTPQQLINIRPVIASIKEFFGSSQLSQFMDQANPLAELTHKRRLSALGPGGLTRERAGMEVRDVHYSHYGRMCPIETPEGPNIGLINSLSSYARVNEFGFIETPYRKVDIETNTVTSQIDYLTADEEDAYVVAQANARLDDNGKFLDDEVVCRFRGDNTVMARERMDYMDVSPKQVVSAATACIPFLENDDSNRALMGANMQRQAVPLMNPEAPFVGTGMEHVAARDSGAAVVAKYKGRVEHVEARQIKVRRIVEEGGKEIETDLDVYKLAKFARSNSGTCYNQRPIVEAGNIVTKGEILADGPSMELGEMALGRNVVVGFMTWDGYNYEDAVIMSERLVKDDVYTSIHIEEYESEARDTKLGPEEITRDIPNVSDNALKNLDDRGIIFVGAEVRDGDILVGKVTPKGVTELTAEERLLHAIFGEKAREVRDTSLRVPHGADGIVLDVKVFNREDGDELPPGVNQLVRVYIVQKRKIHVGDKMCGRHGNKGVISRILPEEDMPFMPDGTPIDIMLNPLGVPSRMNIGQVLELHLGMAAKNLGLHVASPVFDGANDEDVWSTIEEAGMARDGKTVLYDGRTGEPFDNRVSVGVMYMLKLAHMVDDKLHARSTGPYSLVTQQPLGGKAQFGGQRFGEMEVWALEAYGAAYTLQEILTYKSDDTVGRVKTYEAIVKGENIPRPGVPESFRVLMKELQSLGLDVKVMDNKDEEIEMRDLEDDDFVDSKINIAKAPMPEAEITE</sequence>
<comment type="function">
    <text evidence="1">DNA-dependent RNA polymerase catalyzes the transcription of DNA into RNA using the four ribonucleoside triphosphates as substrates.</text>
</comment>
<comment type="catalytic activity">
    <reaction evidence="1">
        <text>RNA(n) + a ribonucleoside 5'-triphosphate = RNA(n+1) + diphosphate</text>
        <dbReference type="Rhea" id="RHEA:21248"/>
        <dbReference type="Rhea" id="RHEA-COMP:14527"/>
        <dbReference type="Rhea" id="RHEA-COMP:17342"/>
        <dbReference type="ChEBI" id="CHEBI:33019"/>
        <dbReference type="ChEBI" id="CHEBI:61557"/>
        <dbReference type="ChEBI" id="CHEBI:140395"/>
        <dbReference type="EC" id="2.7.7.6"/>
    </reaction>
</comment>
<comment type="subunit">
    <text evidence="1">The RNAP catalytic core consists of 2 alpha, 1 beta, 1 beta' and 1 omega subunit. When a sigma factor is associated with the core the holoenzyme is formed, which can initiate transcription.</text>
</comment>
<comment type="similarity">
    <text evidence="1">Belongs to the RNA polymerase beta chain family.</text>
</comment>
<accession>B9E8Q5</accession>
<name>RPOB_MACCJ</name>
<dbReference type="EC" id="2.7.7.6" evidence="1"/>
<dbReference type="EMBL" id="AP009484">
    <property type="protein sequence ID" value="BAH18573.1"/>
    <property type="molecule type" value="Genomic_DNA"/>
</dbReference>
<dbReference type="RefSeq" id="WP_015912365.1">
    <property type="nucleotide sequence ID" value="NC_011999.1"/>
</dbReference>
<dbReference type="SMR" id="B9E8Q5"/>
<dbReference type="STRING" id="458233.MCCL_1866"/>
<dbReference type="KEGG" id="mcl:MCCL_1866"/>
<dbReference type="eggNOG" id="COG0085">
    <property type="taxonomic scope" value="Bacteria"/>
</dbReference>
<dbReference type="HOGENOM" id="CLU_000524_4_1_9"/>
<dbReference type="OrthoDB" id="9803954at2"/>
<dbReference type="Proteomes" id="UP000001383">
    <property type="component" value="Chromosome"/>
</dbReference>
<dbReference type="GO" id="GO:0000428">
    <property type="term" value="C:DNA-directed RNA polymerase complex"/>
    <property type="evidence" value="ECO:0007669"/>
    <property type="project" value="UniProtKB-KW"/>
</dbReference>
<dbReference type="GO" id="GO:0003677">
    <property type="term" value="F:DNA binding"/>
    <property type="evidence" value="ECO:0007669"/>
    <property type="project" value="UniProtKB-UniRule"/>
</dbReference>
<dbReference type="GO" id="GO:0003899">
    <property type="term" value="F:DNA-directed RNA polymerase activity"/>
    <property type="evidence" value="ECO:0007669"/>
    <property type="project" value="UniProtKB-UniRule"/>
</dbReference>
<dbReference type="GO" id="GO:0032549">
    <property type="term" value="F:ribonucleoside binding"/>
    <property type="evidence" value="ECO:0007669"/>
    <property type="project" value="InterPro"/>
</dbReference>
<dbReference type="GO" id="GO:0006351">
    <property type="term" value="P:DNA-templated transcription"/>
    <property type="evidence" value="ECO:0007669"/>
    <property type="project" value="UniProtKB-UniRule"/>
</dbReference>
<dbReference type="CDD" id="cd00653">
    <property type="entry name" value="RNA_pol_B_RPB2"/>
    <property type="match status" value="1"/>
</dbReference>
<dbReference type="FunFam" id="3.90.1800.10:FF:000001">
    <property type="entry name" value="DNA-directed RNA polymerase subunit beta"/>
    <property type="match status" value="1"/>
</dbReference>
<dbReference type="Gene3D" id="2.40.50.100">
    <property type="match status" value="1"/>
</dbReference>
<dbReference type="Gene3D" id="2.40.50.150">
    <property type="match status" value="1"/>
</dbReference>
<dbReference type="Gene3D" id="3.90.1100.10">
    <property type="match status" value="3"/>
</dbReference>
<dbReference type="Gene3D" id="2.40.270.10">
    <property type="entry name" value="DNA-directed RNA polymerase, subunit 2, domain 6"/>
    <property type="match status" value="1"/>
</dbReference>
<dbReference type="Gene3D" id="3.90.1800.10">
    <property type="entry name" value="RNA polymerase alpha subunit dimerisation domain"/>
    <property type="match status" value="1"/>
</dbReference>
<dbReference type="Gene3D" id="3.90.1110.10">
    <property type="entry name" value="RNA polymerase Rpb2, domain 2"/>
    <property type="match status" value="1"/>
</dbReference>
<dbReference type="HAMAP" id="MF_01321">
    <property type="entry name" value="RNApol_bact_RpoB"/>
    <property type="match status" value="1"/>
</dbReference>
<dbReference type="InterPro" id="IPR019462">
    <property type="entry name" value="DNA-dir_RNA_pol_bsu_external_1"/>
</dbReference>
<dbReference type="InterPro" id="IPR015712">
    <property type="entry name" value="DNA-dir_RNA_pol_su2"/>
</dbReference>
<dbReference type="InterPro" id="IPR007120">
    <property type="entry name" value="DNA-dir_RNAP_su2_dom"/>
</dbReference>
<dbReference type="InterPro" id="IPR037033">
    <property type="entry name" value="DNA-dir_RNAP_su2_hyb_sf"/>
</dbReference>
<dbReference type="InterPro" id="IPR010243">
    <property type="entry name" value="RNA_pol_bsu_bac"/>
</dbReference>
<dbReference type="InterPro" id="IPR007121">
    <property type="entry name" value="RNA_pol_bsu_CS"/>
</dbReference>
<dbReference type="InterPro" id="IPR007644">
    <property type="entry name" value="RNA_pol_bsu_protrusion"/>
</dbReference>
<dbReference type="InterPro" id="IPR007642">
    <property type="entry name" value="RNA_pol_Rpb2_2"/>
</dbReference>
<dbReference type="InterPro" id="IPR037034">
    <property type="entry name" value="RNA_pol_Rpb2_2_sf"/>
</dbReference>
<dbReference type="InterPro" id="IPR007645">
    <property type="entry name" value="RNA_pol_Rpb2_3"/>
</dbReference>
<dbReference type="InterPro" id="IPR007641">
    <property type="entry name" value="RNA_pol_Rpb2_7"/>
</dbReference>
<dbReference type="InterPro" id="IPR014724">
    <property type="entry name" value="RNA_pol_RPB2_OB-fold"/>
</dbReference>
<dbReference type="NCBIfam" id="NF001616">
    <property type="entry name" value="PRK00405.1"/>
    <property type="match status" value="1"/>
</dbReference>
<dbReference type="NCBIfam" id="TIGR02013">
    <property type="entry name" value="rpoB"/>
    <property type="match status" value="1"/>
</dbReference>
<dbReference type="PANTHER" id="PTHR20856">
    <property type="entry name" value="DNA-DIRECTED RNA POLYMERASE I SUBUNIT 2"/>
    <property type="match status" value="1"/>
</dbReference>
<dbReference type="Pfam" id="PF04563">
    <property type="entry name" value="RNA_pol_Rpb2_1"/>
    <property type="match status" value="1"/>
</dbReference>
<dbReference type="Pfam" id="PF04561">
    <property type="entry name" value="RNA_pol_Rpb2_2"/>
    <property type="match status" value="2"/>
</dbReference>
<dbReference type="Pfam" id="PF04565">
    <property type="entry name" value="RNA_pol_Rpb2_3"/>
    <property type="match status" value="1"/>
</dbReference>
<dbReference type="Pfam" id="PF10385">
    <property type="entry name" value="RNA_pol_Rpb2_45"/>
    <property type="match status" value="1"/>
</dbReference>
<dbReference type="Pfam" id="PF00562">
    <property type="entry name" value="RNA_pol_Rpb2_6"/>
    <property type="match status" value="1"/>
</dbReference>
<dbReference type="Pfam" id="PF04560">
    <property type="entry name" value="RNA_pol_Rpb2_7"/>
    <property type="match status" value="1"/>
</dbReference>
<dbReference type="SUPFAM" id="SSF64484">
    <property type="entry name" value="beta and beta-prime subunits of DNA dependent RNA-polymerase"/>
    <property type="match status" value="1"/>
</dbReference>
<dbReference type="PROSITE" id="PS01166">
    <property type="entry name" value="RNA_POL_BETA"/>
    <property type="match status" value="1"/>
</dbReference>
<reference key="1">
    <citation type="journal article" date="2009" name="J. Bacteriol.">
        <title>Complete genome sequence of Macrococcus caseolyticus strain JCSCS5402, reflecting the ancestral genome of the human-pathogenic staphylococci.</title>
        <authorList>
            <person name="Baba T."/>
            <person name="Kuwahara-Arai K."/>
            <person name="Uchiyama I."/>
            <person name="Takeuchi F."/>
            <person name="Ito T."/>
            <person name="Hiramatsu K."/>
        </authorList>
    </citation>
    <scope>NUCLEOTIDE SEQUENCE [LARGE SCALE GENOMIC DNA]</scope>
    <source>
        <strain>JCSC5402</strain>
    </source>
</reference>
<proteinExistence type="inferred from homology"/>
<organism>
    <name type="scientific">Macrococcus caseolyticus (strain JCSC5402)</name>
    <name type="common">Macrococcoides caseolyticum</name>
    <dbReference type="NCBI Taxonomy" id="458233"/>
    <lineage>
        <taxon>Bacteria</taxon>
        <taxon>Bacillati</taxon>
        <taxon>Bacillota</taxon>
        <taxon>Bacilli</taxon>
        <taxon>Bacillales</taxon>
        <taxon>Staphylococcaceae</taxon>
        <taxon>Macrococcoides</taxon>
    </lineage>
</organism>
<keyword id="KW-0240">DNA-directed RNA polymerase</keyword>
<keyword id="KW-0548">Nucleotidyltransferase</keyword>
<keyword id="KW-1185">Reference proteome</keyword>
<keyword id="KW-0804">Transcription</keyword>
<keyword id="KW-0808">Transferase</keyword>
<evidence type="ECO:0000255" key="1">
    <source>
        <dbReference type="HAMAP-Rule" id="MF_01321"/>
    </source>
</evidence>
<feature type="chain" id="PRO_1000165811" description="DNA-directed RNA polymerase subunit beta">
    <location>
        <begin position="1"/>
        <end position="1180"/>
    </location>
</feature>
<gene>
    <name evidence="1" type="primary">rpoB</name>
    <name type="ordered locus">MCCL_1866</name>
</gene>
<protein>
    <recommendedName>
        <fullName evidence="1">DNA-directed RNA polymerase subunit beta</fullName>
        <shortName evidence="1">RNAP subunit beta</shortName>
        <ecNumber evidence="1">2.7.7.6</ecNumber>
    </recommendedName>
    <alternativeName>
        <fullName evidence="1">RNA polymerase subunit beta</fullName>
    </alternativeName>
    <alternativeName>
        <fullName evidence="1">Transcriptase subunit beta</fullName>
    </alternativeName>
</protein>